<keyword id="KW-0106">Calcium</keyword>
<keyword id="KW-0460">Magnesium</keyword>
<keyword id="KW-0479">Metal-binding</keyword>
<keyword id="KW-1185">Reference proteome</keyword>
<keyword id="KW-0786">Thiamine pyrophosphate</keyword>
<keyword id="KW-0808">Transferase</keyword>
<proteinExistence type="inferred from homology"/>
<feature type="chain" id="PRO_0000191850" description="Transketolase">
    <location>
        <begin position="1"/>
        <end position="689"/>
    </location>
</feature>
<feature type="active site" description="Proton donor" evidence="1">
    <location>
        <position position="434"/>
    </location>
</feature>
<feature type="binding site" evidence="1">
    <location>
        <position position="56"/>
    </location>
    <ligand>
        <name>substrate</name>
    </ligand>
</feature>
<feature type="binding site" evidence="1">
    <location>
        <position position="96"/>
    </location>
    <ligand>
        <name>thiamine diphosphate</name>
        <dbReference type="ChEBI" id="CHEBI:58937"/>
    </ligand>
</feature>
<feature type="binding site" evidence="1">
    <location>
        <begin position="144"/>
        <end position="146"/>
    </location>
    <ligand>
        <name>thiamine diphosphate</name>
        <dbReference type="ChEBI" id="CHEBI:58937"/>
    </ligand>
</feature>
<feature type="binding site" evidence="1">
    <location>
        <position position="185"/>
    </location>
    <ligand>
        <name>Mg(2+)</name>
        <dbReference type="ChEBI" id="CHEBI:18420"/>
    </ligand>
</feature>
<feature type="binding site" evidence="1">
    <location>
        <position position="186"/>
    </location>
    <ligand>
        <name>thiamine diphosphate</name>
        <dbReference type="ChEBI" id="CHEBI:58937"/>
    </ligand>
</feature>
<feature type="binding site" evidence="1">
    <location>
        <position position="215"/>
    </location>
    <ligand>
        <name>Mg(2+)</name>
        <dbReference type="ChEBI" id="CHEBI:18420"/>
    </ligand>
</feature>
<feature type="binding site" evidence="1">
    <location>
        <position position="215"/>
    </location>
    <ligand>
        <name>thiamine diphosphate</name>
        <dbReference type="ChEBI" id="CHEBI:58937"/>
    </ligand>
</feature>
<feature type="binding site" evidence="1">
    <location>
        <position position="217"/>
    </location>
    <ligand>
        <name>Mg(2+)</name>
        <dbReference type="ChEBI" id="CHEBI:18420"/>
    </ligand>
</feature>
<feature type="binding site" evidence="1">
    <location>
        <position position="289"/>
    </location>
    <ligand>
        <name>substrate</name>
    </ligand>
</feature>
<feature type="binding site" evidence="1">
    <location>
        <position position="289"/>
    </location>
    <ligand>
        <name>thiamine diphosphate</name>
        <dbReference type="ChEBI" id="CHEBI:58937"/>
    </ligand>
</feature>
<feature type="binding site" evidence="1">
    <location>
        <position position="380"/>
    </location>
    <ligand>
        <name>substrate</name>
    </ligand>
</feature>
<feature type="binding site" evidence="1">
    <location>
        <position position="407"/>
    </location>
    <ligand>
        <name>substrate</name>
    </ligand>
</feature>
<feature type="binding site" evidence="1">
    <location>
        <position position="460"/>
    </location>
    <ligand>
        <name>thiamine diphosphate</name>
        <dbReference type="ChEBI" id="CHEBI:58937"/>
    </ligand>
</feature>
<feature type="binding site" evidence="1">
    <location>
        <position position="484"/>
    </location>
    <ligand>
        <name>substrate</name>
    </ligand>
</feature>
<feature type="binding site" evidence="1">
    <location>
        <position position="492"/>
    </location>
    <ligand>
        <name>substrate</name>
    </ligand>
</feature>
<feature type="binding site" evidence="1">
    <location>
        <position position="543"/>
    </location>
    <ligand>
        <name>substrate</name>
    </ligand>
</feature>
<feature type="site" description="Important for catalytic activity" evidence="1">
    <location>
        <position position="56"/>
    </location>
</feature>
<feature type="site" description="Important for catalytic activity" evidence="1">
    <location>
        <position position="289"/>
    </location>
</feature>
<protein>
    <recommendedName>
        <fullName>Transketolase</fullName>
        <shortName>TK</shortName>
        <ecNumber>2.2.1.1</ecNumber>
    </recommendedName>
</protein>
<sequence>MVVQLDQIHFFIFHEVLKIFKTMPQLFKTSKKIDELVINTIRFLSVDMVERAKSGHPGMPLGASHIVYLLYDRIMKYNPKNPNWFNRDRFILSAGHGSAMLYAAFYMFGFDLTLEDLKAFRQLNSKTPGHPEYGLTPGVEVTTGNLGQGFGNAVGMAMAEKFLSHYFNREGYPVIDHYTYVLVSDGDLMEGVSYEAASLAGHFKLNKLIAIWDNNHITIDGDTKLTWTEDVLKRFEALGWEVYHLEDGYNLDLLEETILKAKESDKPTFISVRTHIGYGTPLQDTPEVHGKPMGKEIVEETKKKFGWPLEEFYVPEEALNYTRRKVEEGKALEEEWNKLYAEYREKYPDLAQTLEKALNKEWSLDWLEKVEEFKEDMPTRKASGKVLNVMADYIPTMIGGSADLSESVNTVLKKYGDFEADTPTGRNVHYGVREHAMGTILNGMAYHGGILPYGGTFLIFSEYMRPAIRTAALANLQVIFVYSHDSIGLGEDGPTHQPVEQLWSLRSIPNLWVVRPADANEVKYAWEIALKRKNGPTAIILTRQKVKTIDRSKYASPEGVRKGAYVIADTEGKPDVVIIATGSEVQVALGAKEILEQKGIKTRVVNMACCELFEEQPEEYKREVLPPEVTKRVAVEAGRDTGWYKYVGSDGLVISLNEFGKSAPGSVLFEYYGFTPENVANKVIEKWFS</sequence>
<dbReference type="EC" id="2.2.1.1"/>
<dbReference type="EMBL" id="AE000657">
    <property type="protein sequence ID" value="AAC07607.1"/>
    <property type="molecule type" value="Genomic_DNA"/>
</dbReference>
<dbReference type="PIR" id="H70451">
    <property type="entry name" value="H70451"/>
</dbReference>
<dbReference type="RefSeq" id="NP_214208.1">
    <property type="nucleotide sequence ID" value="NC_000918.1"/>
</dbReference>
<dbReference type="SMR" id="O67642"/>
<dbReference type="FunCoup" id="O67642">
    <property type="interactions" value="433"/>
</dbReference>
<dbReference type="STRING" id="224324.aq_1765"/>
<dbReference type="EnsemblBacteria" id="AAC07607">
    <property type="protein sequence ID" value="AAC07607"/>
    <property type="gene ID" value="aq_1765"/>
</dbReference>
<dbReference type="KEGG" id="aae:aq_1765"/>
<dbReference type="PATRIC" id="fig|224324.8.peg.1361"/>
<dbReference type="eggNOG" id="COG0021">
    <property type="taxonomic scope" value="Bacteria"/>
</dbReference>
<dbReference type="HOGENOM" id="CLU_009227_0_0_0"/>
<dbReference type="InParanoid" id="O67642"/>
<dbReference type="OrthoDB" id="8732661at2"/>
<dbReference type="Proteomes" id="UP000000798">
    <property type="component" value="Chromosome"/>
</dbReference>
<dbReference type="GO" id="GO:0005829">
    <property type="term" value="C:cytosol"/>
    <property type="evidence" value="ECO:0000318"/>
    <property type="project" value="GO_Central"/>
</dbReference>
<dbReference type="GO" id="GO:0046872">
    <property type="term" value="F:metal ion binding"/>
    <property type="evidence" value="ECO:0007669"/>
    <property type="project" value="UniProtKB-KW"/>
</dbReference>
<dbReference type="GO" id="GO:0004802">
    <property type="term" value="F:transketolase activity"/>
    <property type="evidence" value="ECO:0000318"/>
    <property type="project" value="GO_Central"/>
</dbReference>
<dbReference type="GO" id="GO:0006098">
    <property type="term" value="P:pentose-phosphate shunt"/>
    <property type="evidence" value="ECO:0000318"/>
    <property type="project" value="GO_Central"/>
</dbReference>
<dbReference type="CDD" id="cd07033">
    <property type="entry name" value="TPP_PYR_DXS_TK_like"/>
    <property type="match status" value="1"/>
</dbReference>
<dbReference type="CDD" id="cd02012">
    <property type="entry name" value="TPP_TK"/>
    <property type="match status" value="1"/>
</dbReference>
<dbReference type="FunFam" id="3.40.50.920:FF:000003">
    <property type="entry name" value="Transketolase"/>
    <property type="match status" value="1"/>
</dbReference>
<dbReference type="FunFam" id="3.40.50.970:FF:000004">
    <property type="entry name" value="Transketolase"/>
    <property type="match status" value="1"/>
</dbReference>
<dbReference type="FunFam" id="3.40.50.970:FF:000076">
    <property type="entry name" value="Transketolase"/>
    <property type="match status" value="1"/>
</dbReference>
<dbReference type="Gene3D" id="3.40.50.920">
    <property type="match status" value="1"/>
</dbReference>
<dbReference type="Gene3D" id="3.40.50.970">
    <property type="match status" value="2"/>
</dbReference>
<dbReference type="InterPro" id="IPR029061">
    <property type="entry name" value="THDP-binding"/>
</dbReference>
<dbReference type="InterPro" id="IPR009014">
    <property type="entry name" value="Transketo_C/PFOR_II"/>
</dbReference>
<dbReference type="InterPro" id="IPR055152">
    <property type="entry name" value="Transketolase-like_C_2"/>
</dbReference>
<dbReference type="InterPro" id="IPR005475">
    <property type="entry name" value="Transketolase-like_Pyr-bd"/>
</dbReference>
<dbReference type="InterPro" id="IPR005478">
    <property type="entry name" value="Transketolase_bac-like"/>
</dbReference>
<dbReference type="InterPro" id="IPR049557">
    <property type="entry name" value="Transketolase_CS"/>
</dbReference>
<dbReference type="InterPro" id="IPR033247">
    <property type="entry name" value="Transketolase_fam"/>
</dbReference>
<dbReference type="InterPro" id="IPR005474">
    <property type="entry name" value="Transketolase_N"/>
</dbReference>
<dbReference type="NCBIfam" id="TIGR00232">
    <property type="entry name" value="tktlase_bact"/>
    <property type="match status" value="1"/>
</dbReference>
<dbReference type="PANTHER" id="PTHR43522">
    <property type="entry name" value="TRANSKETOLASE"/>
    <property type="match status" value="1"/>
</dbReference>
<dbReference type="PANTHER" id="PTHR43522:SF2">
    <property type="entry name" value="TRANSKETOLASE 1-RELATED"/>
    <property type="match status" value="1"/>
</dbReference>
<dbReference type="Pfam" id="PF02779">
    <property type="entry name" value="Transket_pyr"/>
    <property type="match status" value="1"/>
</dbReference>
<dbReference type="Pfam" id="PF22613">
    <property type="entry name" value="Transketolase_C_1"/>
    <property type="match status" value="1"/>
</dbReference>
<dbReference type="Pfam" id="PF00456">
    <property type="entry name" value="Transketolase_N"/>
    <property type="match status" value="1"/>
</dbReference>
<dbReference type="SMART" id="SM00861">
    <property type="entry name" value="Transket_pyr"/>
    <property type="match status" value="1"/>
</dbReference>
<dbReference type="SUPFAM" id="SSF52518">
    <property type="entry name" value="Thiamin diphosphate-binding fold (THDP-binding)"/>
    <property type="match status" value="2"/>
</dbReference>
<dbReference type="SUPFAM" id="SSF52922">
    <property type="entry name" value="TK C-terminal domain-like"/>
    <property type="match status" value="1"/>
</dbReference>
<dbReference type="PROSITE" id="PS00801">
    <property type="entry name" value="TRANSKETOLASE_1"/>
    <property type="match status" value="1"/>
</dbReference>
<gene>
    <name type="primary">tkt</name>
    <name type="synonym">tktA</name>
    <name type="ordered locus">aq_1765</name>
</gene>
<comment type="function">
    <text evidence="1">Catalyzes the transfer of a two-carbon ketol group from a ketose donor to an aldose acceptor, via a covalent intermediate with the cofactor thiamine pyrophosphate.</text>
</comment>
<comment type="catalytic activity">
    <reaction>
        <text>D-sedoheptulose 7-phosphate + D-glyceraldehyde 3-phosphate = aldehydo-D-ribose 5-phosphate + D-xylulose 5-phosphate</text>
        <dbReference type="Rhea" id="RHEA:10508"/>
        <dbReference type="ChEBI" id="CHEBI:57483"/>
        <dbReference type="ChEBI" id="CHEBI:57737"/>
        <dbReference type="ChEBI" id="CHEBI:58273"/>
        <dbReference type="ChEBI" id="CHEBI:59776"/>
        <dbReference type="EC" id="2.2.1.1"/>
    </reaction>
</comment>
<comment type="cofactor">
    <cofactor evidence="1">
        <name>Mg(2+)</name>
        <dbReference type="ChEBI" id="CHEBI:18420"/>
    </cofactor>
    <cofactor evidence="1">
        <name>Ca(2+)</name>
        <dbReference type="ChEBI" id="CHEBI:29108"/>
    </cofactor>
    <cofactor evidence="1">
        <name>Mn(2+)</name>
        <dbReference type="ChEBI" id="CHEBI:29035"/>
    </cofactor>
    <cofactor evidence="1">
        <name>Co(2+)</name>
        <dbReference type="ChEBI" id="CHEBI:48828"/>
    </cofactor>
    <text evidence="1">Binds 1 Mg(2+) ion per subunit. Can also utilize other divalent metal cations, such as Ca(2+), Mn(2+) and Co(2+).</text>
</comment>
<comment type="cofactor">
    <cofactor evidence="1">
        <name>thiamine diphosphate</name>
        <dbReference type="ChEBI" id="CHEBI:58937"/>
    </cofactor>
    <text evidence="1">Binds 1 thiamine pyrophosphate per subunit.</text>
</comment>
<comment type="subunit">
    <text evidence="1">Homodimer.</text>
</comment>
<comment type="similarity">
    <text evidence="2">Belongs to the transketolase family.</text>
</comment>
<evidence type="ECO:0000250" key="1"/>
<evidence type="ECO:0000305" key="2"/>
<accession>O67642</accession>
<reference key="1">
    <citation type="journal article" date="1998" name="Nature">
        <title>The complete genome of the hyperthermophilic bacterium Aquifex aeolicus.</title>
        <authorList>
            <person name="Deckert G."/>
            <person name="Warren P.V."/>
            <person name="Gaasterland T."/>
            <person name="Young W.G."/>
            <person name="Lenox A.L."/>
            <person name="Graham D.E."/>
            <person name="Overbeek R."/>
            <person name="Snead M.A."/>
            <person name="Keller M."/>
            <person name="Aujay M."/>
            <person name="Huber R."/>
            <person name="Feldman R.A."/>
            <person name="Short J.M."/>
            <person name="Olsen G.J."/>
            <person name="Swanson R.V."/>
        </authorList>
    </citation>
    <scope>NUCLEOTIDE SEQUENCE [LARGE SCALE GENOMIC DNA]</scope>
    <source>
        <strain>VF5</strain>
    </source>
</reference>
<organism>
    <name type="scientific">Aquifex aeolicus (strain VF5)</name>
    <dbReference type="NCBI Taxonomy" id="224324"/>
    <lineage>
        <taxon>Bacteria</taxon>
        <taxon>Pseudomonadati</taxon>
        <taxon>Aquificota</taxon>
        <taxon>Aquificia</taxon>
        <taxon>Aquificales</taxon>
        <taxon>Aquificaceae</taxon>
        <taxon>Aquifex</taxon>
    </lineage>
</organism>
<name>TKT_AQUAE</name>